<evidence type="ECO:0000255" key="1">
    <source>
        <dbReference type="HAMAP-Rule" id="MF_00192"/>
    </source>
</evidence>
<protein>
    <recommendedName>
        <fullName evidence="1">DNA-directed RNA polymerase subunit Rpo6</fullName>
        <ecNumber evidence="1">2.7.7.6</ecNumber>
    </recommendedName>
    <alternativeName>
        <fullName evidence="1">DNA-directed RNA polymerase subunit K</fullName>
    </alternativeName>
</protein>
<reference key="1">
    <citation type="journal article" date="2001" name="DNA Res.">
        <title>Complete genome sequence of an aerobic thermoacidophilic Crenarchaeon, Sulfolobus tokodaii strain7.</title>
        <authorList>
            <person name="Kawarabayasi Y."/>
            <person name="Hino Y."/>
            <person name="Horikawa H."/>
            <person name="Jin-no K."/>
            <person name="Takahashi M."/>
            <person name="Sekine M."/>
            <person name="Baba S."/>
            <person name="Ankai A."/>
            <person name="Kosugi H."/>
            <person name="Hosoyama A."/>
            <person name="Fukui S."/>
            <person name="Nagai Y."/>
            <person name="Nishijima K."/>
            <person name="Otsuka R."/>
            <person name="Nakazawa H."/>
            <person name="Takamiya M."/>
            <person name="Kato Y."/>
            <person name="Yoshizawa T."/>
            <person name="Tanaka T."/>
            <person name="Kudoh Y."/>
            <person name="Yamazaki J."/>
            <person name="Kushida N."/>
            <person name="Oguchi A."/>
            <person name="Aoki K."/>
            <person name="Masuda S."/>
            <person name="Yanagii M."/>
            <person name="Nishimura M."/>
            <person name="Yamagishi A."/>
            <person name="Oshima T."/>
            <person name="Kikuchi H."/>
        </authorList>
    </citation>
    <scope>NUCLEOTIDE SEQUENCE [LARGE SCALE GENOMIC DNA]</scope>
    <source>
        <strain>DSM 16993 / JCM 10545 / NBRC 100140 / 7</strain>
    </source>
</reference>
<keyword id="KW-0963">Cytoplasm</keyword>
<keyword id="KW-0240">DNA-directed RNA polymerase</keyword>
<keyword id="KW-0548">Nucleotidyltransferase</keyword>
<keyword id="KW-1185">Reference proteome</keyword>
<keyword id="KW-0804">Transcription</keyword>
<keyword id="KW-0808">Transferase</keyword>
<gene>
    <name evidence="1" type="primary">rpo6</name>
    <name evidence="1" type="synonym">rpoK</name>
    <name type="ordered locus">STK_12165</name>
    <name type="ORF">STS136</name>
</gene>
<feature type="chain" id="PRO_0000133824" description="DNA-directed RNA polymerase subunit Rpo6">
    <location>
        <begin position="1"/>
        <end position="86"/>
    </location>
</feature>
<organism>
    <name type="scientific">Sulfurisphaera tokodaii (strain DSM 16993 / JCM 10545 / NBRC 100140 / 7)</name>
    <name type="common">Sulfolobus tokodaii</name>
    <dbReference type="NCBI Taxonomy" id="273063"/>
    <lineage>
        <taxon>Archaea</taxon>
        <taxon>Thermoproteota</taxon>
        <taxon>Thermoprotei</taxon>
        <taxon>Sulfolobales</taxon>
        <taxon>Sulfolobaceae</taxon>
        <taxon>Sulfurisphaera</taxon>
    </lineage>
</organism>
<comment type="function">
    <text evidence="1">DNA-dependent RNA polymerase (RNAP) catalyzes the transcription of DNA into RNA using the four ribonucleoside triphosphates as substrates.</text>
</comment>
<comment type="catalytic activity">
    <reaction evidence="1">
        <text>RNA(n) + a ribonucleoside 5'-triphosphate = RNA(n+1) + diphosphate</text>
        <dbReference type="Rhea" id="RHEA:21248"/>
        <dbReference type="Rhea" id="RHEA-COMP:14527"/>
        <dbReference type="Rhea" id="RHEA-COMP:17342"/>
        <dbReference type="ChEBI" id="CHEBI:33019"/>
        <dbReference type="ChEBI" id="CHEBI:61557"/>
        <dbReference type="ChEBI" id="CHEBI:140395"/>
        <dbReference type="EC" id="2.7.7.6"/>
    </reaction>
</comment>
<comment type="subunit">
    <text evidence="1">Part of the RNA polymerase complex.</text>
</comment>
<comment type="subcellular location">
    <subcellularLocation>
        <location evidence="1">Cytoplasm</location>
    </subcellularLocation>
</comment>
<comment type="similarity">
    <text evidence="1">Belongs to the archaeal Rpo6/eukaryotic RPB6 RNA polymerase subunit family.</text>
</comment>
<dbReference type="EC" id="2.7.7.6" evidence="1"/>
<dbReference type="EMBL" id="BA000023">
    <property type="protein sequence ID" value="BAB66258.1"/>
    <property type="molecule type" value="Genomic_DNA"/>
</dbReference>
<dbReference type="SMR" id="Q972B1"/>
<dbReference type="STRING" id="273063.STK_12165"/>
<dbReference type="KEGG" id="sto:STK_12165"/>
<dbReference type="PATRIC" id="fig|273063.9.peg.1374"/>
<dbReference type="eggNOG" id="arCOG01268">
    <property type="taxonomic scope" value="Archaea"/>
</dbReference>
<dbReference type="Proteomes" id="UP000001015">
    <property type="component" value="Chromosome"/>
</dbReference>
<dbReference type="GO" id="GO:0005737">
    <property type="term" value="C:cytoplasm"/>
    <property type="evidence" value="ECO:0007669"/>
    <property type="project" value="UniProtKB-SubCell"/>
</dbReference>
<dbReference type="GO" id="GO:0000428">
    <property type="term" value="C:DNA-directed RNA polymerase complex"/>
    <property type="evidence" value="ECO:0007669"/>
    <property type="project" value="UniProtKB-KW"/>
</dbReference>
<dbReference type="GO" id="GO:0003677">
    <property type="term" value="F:DNA binding"/>
    <property type="evidence" value="ECO:0007669"/>
    <property type="project" value="UniProtKB-UniRule"/>
</dbReference>
<dbReference type="GO" id="GO:0003899">
    <property type="term" value="F:DNA-directed RNA polymerase activity"/>
    <property type="evidence" value="ECO:0007669"/>
    <property type="project" value="UniProtKB-UniRule"/>
</dbReference>
<dbReference type="GO" id="GO:0006360">
    <property type="term" value="P:transcription by RNA polymerase I"/>
    <property type="evidence" value="ECO:0007669"/>
    <property type="project" value="TreeGrafter"/>
</dbReference>
<dbReference type="GO" id="GO:0006366">
    <property type="term" value="P:transcription by RNA polymerase II"/>
    <property type="evidence" value="ECO:0007669"/>
    <property type="project" value="TreeGrafter"/>
</dbReference>
<dbReference type="GO" id="GO:0042797">
    <property type="term" value="P:tRNA transcription by RNA polymerase III"/>
    <property type="evidence" value="ECO:0007669"/>
    <property type="project" value="TreeGrafter"/>
</dbReference>
<dbReference type="Gene3D" id="3.90.940.10">
    <property type="match status" value="1"/>
</dbReference>
<dbReference type="HAMAP" id="MF_00192">
    <property type="entry name" value="RNApol_arch_Rpo6"/>
    <property type="match status" value="1"/>
</dbReference>
<dbReference type="InterPro" id="IPR020708">
    <property type="entry name" value="DNA-dir_RNA_polK_14-18kDa_CS"/>
</dbReference>
<dbReference type="InterPro" id="IPR006110">
    <property type="entry name" value="Pol_omega/Rpo6/RPB6"/>
</dbReference>
<dbReference type="InterPro" id="IPR036161">
    <property type="entry name" value="RPB6/omega-like_sf"/>
</dbReference>
<dbReference type="InterPro" id="IPR006111">
    <property type="entry name" value="Rpo6/Rpb6"/>
</dbReference>
<dbReference type="NCBIfam" id="NF002207">
    <property type="entry name" value="PRK01099.1-2"/>
    <property type="match status" value="1"/>
</dbReference>
<dbReference type="NCBIfam" id="NF002208">
    <property type="entry name" value="PRK01099.1-3"/>
    <property type="match status" value="1"/>
</dbReference>
<dbReference type="NCBIfam" id="NF002209">
    <property type="entry name" value="PRK01099.1-4"/>
    <property type="match status" value="1"/>
</dbReference>
<dbReference type="PANTHER" id="PTHR47227">
    <property type="entry name" value="DNA-DIRECTED RNA POLYMERASE SUBUNIT K"/>
    <property type="match status" value="1"/>
</dbReference>
<dbReference type="PANTHER" id="PTHR47227:SF5">
    <property type="entry name" value="DNA-DIRECTED RNA POLYMERASES I, II, AND III SUBUNIT RPABC2"/>
    <property type="match status" value="1"/>
</dbReference>
<dbReference type="Pfam" id="PF01192">
    <property type="entry name" value="RNA_pol_Rpb6"/>
    <property type="match status" value="1"/>
</dbReference>
<dbReference type="PIRSF" id="PIRSF000778">
    <property type="entry name" value="RpoK/RPB6"/>
    <property type="match status" value="1"/>
</dbReference>
<dbReference type="SMART" id="SM01409">
    <property type="entry name" value="RNA_pol_Rpb6"/>
    <property type="match status" value="1"/>
</dbReference>
<dbReference type="SUPFAM" id="SSF63562">
    <property type="entry name" value="RPB6/omega subunit-like"/>
    <property type="match status" value="1"/>
</dbReference>
<dbReference type="PROSITE" id="PS01111">
    <property type="entry name" value="RNA_POL_K_14KD"/>
    <property type="match status" value="1"/>
</dbReference>
<sequence length="86" mass="9816">MSINKIFEESWKNRLTKYEIARIISARALQLAMGASPLIDTNNLPFNDVISIAEEELKRGVLPITVRRVYPNGKIELVSVKKVEFK</sequence>
<accession>Q972B1</accession>
<proteinExistence type="inferred from homology"/>
<name>RPO6_SULTO</name>